<feature type="chain" id="PRO_0000401411" description="Long chain acyl-CoA synthetase 3">
    <location>
        <begin position="1"/>
        <end position="665"/>
    </location>
</feature>
<feature type="region of interest" description="Fatty acid-binding" evidence="2">
    <location>
        <begin position="495"/>
        <end position="519"/>
    </location>
</feature>
<feature type="binding site" evidence="2">
    <location>
        <begin position="228"/>
        <end position="239"/>
    </location>
    <ligand>
        <name>ATP</name>
        <dbReference type="ChEBI" id="CHEBI:30616"/>
    </ligand>
</feature>
<evidence type="ECO:0000250" key="1"/>
<evidence type="ECO:0000255" key="2"/>
<evidence type="ECO:0000269" key="3">
    <source>
    </source>
</evidence>
<evidence type="ECO:0000305" key="4"/>
<organism>
    <name type="scientific">Arabidopsis thaliana</name>
    <name type="common">Mouse-ear cress</name>
    <dbReference type="NCBI Taxonomy" id="3702"/>
    <lineage>
        <taxon>Eukaryota</taxon>
        <taxon>Viridiplantae</taxon>
        <taxon>Streptophyta</taxon>
        <taxon>Embryophyta</taxon>
        <taxon>Tracheophyta</taxon>
        <taxon>Spermatophyta</taxon>
        <taxon>Magnoliopsida</taxon>
        <taxon>eudicotyledons</taxon>
        <taxon>Gunneridae</taxon>
        <taxon>Pentapetalae</taxon>
        <taxon>rosids</taxon>
        <taxon>malvids</taxon>
        <taxon>Brassicales</taxon>
        <taxon>Brassicaceae</taxon>
        <taxon>Camelineae</taxon>
        <taxon>Arabidopsis</taxon>
    </lineage>
</organism>
<dbReference type="EC" id="6.2.1.3"/>
<dbReference type="EMBL" id="AF503753">
    <property type="protein sequence ID" value="AAM28870.1"/>
    <property type="molecule type" value="mRNA"/>
</dbReference>
<dbReference type="EMBL" id="AC066689">
    <property type="protein sequence ID" value="AAG51719.1"/>
    <property type="molecule type" value="Genomic_DNA"/>
</dbReference>
<dbReference type="EMBL" id="CP002684">
    <property type="protein sequence ID" value="AEE34237.1"/>
    <property type="molecule type" value="Genomic_DNA"/>
</dbReference>
<dbReference type="EMBL" id="AY039935">
    <property type="protein sequence ID" value="AAK64039.1"/>
    <property type="molecule type" value="mRNA"/>
</dbReference>
<dbReference type="EMBL" id="AY079314">
    <property type="protein sequence ID" value="AAL85045.1"/>
    <property type="molecule type" value="mRNA"/>
</dbReference>
<dbReference type="PIR" id="B96668">
    <property type="entry name" value="B96668"/>
</dbReference>
<dbReference type="RefSeq" id="NP_176622.1">
    <property type="nucleotide sequence ID" value="NM_105115.4"/>
</dbReference>
<dbReference type="SMR" id="Q9C7W4"/>
<dbReference type="FunCoup" id="Q9C7W4">
    <property type="interactions" value="139"/>
</dbReference>
<dbReference type="STRING" id="3702.Q9C7W4"/>
<dbReference type="iPTMnet" id="Q9C7W4"/>
<dbReference type="PaxDb" id="3702-AT1G64400.1"/>
<dbReference type="ProteomicsDB" id="238653"/>
<dbReference type="EnsemblPlants" id="AT1G64400.1">
    <property type="protein sequence ID" value="AT1G64400.1"/>
    <property type="gene ID" value="AT1G64400"/>
</dbReference>
<dbReference type="GeneID" id="842748"/>
<dbReference type="Gramene" id="AT1G64400.1">
    <property type="protein sequence ID" value="AT1G64400.1"/>
    <property type="gene ID" value="AT1G64400"/>
</dbReference>
<dbReference type="KEGG" id="ath:AT1G64400"/>
<dbReference type="Araport" id="AT1G64400"/>
<dbReference type="TAIR" id="AT1G64400">
    <property type="gene designation" value="LACS3"/>
</dbReference>
<dbReference type="eggNOG" id="KOG1256">
    <property type="taxonomic scope" value="Eukaryota"/>
</dbReference>
<dbReference type="HOGENOM" id="CLU_000022_45_4_1"/>
<dbReference type="InParanoid" id="Q9C7W4"/>
<dbReference type="OMA" id="RSDVCTI"/>
<dbReference type="PhylomeDB" id="Q9C7W4"/>
<dbReference type="BioCyc" id="ARA:AT1G64400-MONOMER"/>
<dbReference type="BioCyc" id="MetaCyc:AT1G64400-MONOMER"/>
<dbReference type="UniPathway" id="UPA00199"/>
<dbReference type="PRO" id="PR:Q9C7W4"/>
<dbReference type="Proteomes" id="UP000006548">
    <property type="component" value="Chromosome 1"/>
</dbReference>
<dbReference type="ExpressionAtlas" id="Q9C7W4">
    <property type="expression patterns" value="baseline and differential"/>
</dbReference>
<dbReference type="GO" id="GO:0005783">
    <property type="term" value="C:endoplasmic reticulum"/>
    <property type="evidence" value="ECO:0007005"/>
    <property type="project" value="TAIR"/>
</dbReference>
<dbReference type="GO" id="GO:0005524">
    <property type="term" value="F:ATP binding"/>
    <property type="evidence" value="ECO:0007669"/>
    <property type="project" value="UniProtKB-KW"/>
</dbReference>
<dbReference type="GO" id="GO:0004467">
    <property type="term" value="F:long-chain fatty acid-CoA ligase activity"/>
    <property type="evidence" value="ECO:0000314"/>
    <property type="project" value="UniProtKB"/>
</dbReference>
<dbReference type="GO" id="GO:0006631">
    <property type="term" value="P:fatty acid metabolic process"/>
    <property type="evidence" value="ECO:0000304"/>
    <property type="project" value="UniProtKB"/>
</dbReference>
<dbReference type="CDD" id="cd05927">
    <property type="entry name" value="LC-FACS_euk"/>
    <property type="match status" value="1"/>
</dbReference>
<dbReference type="Gene3D" id="3.40.50.12780">
    <property type="entry name" value="N-terminal domain of ligase-like"/>
    <property type="match status" value="1"/>
</dbReference>
<dbReference type="InterPro" id="IPR020845">
    <property type="entry name" value="AMP-binding_CS"/>
</dbReference>
<dbReference type="InterPro" id="IPR000873">
    <property type="entry name" value="AMP-dep_synth/lig_dom"/>
</dbReference>
<dbReference type="InterPro" id="IPR042099">
    <property type="entry name" value="ANL_N_sf"/>
</dbReference>
<dbReference type="InterPro" id="IPR045311">
    <property type="entry name" value="LC-FACS_euk"/>
</dbReference>
<dbReference type="PANTHER" id="PTHR43272:SF42">
    <property type="entry name" value="LONG CHAIN ACYL-COA SYNTHETASE 3"/>
    <property type="match status" value="1"/>
</dbReference>
<dbReference type="PANTHER" id="PTHR43272">
    <property type="entry name" value="LONG-CHAIN-FATTY-ACID--COA LIGASE"/>
    <property type="match status" value="1"/>
</dbReference>
<dbReference type="Pfam" id="PF00501">
    <property type="entry name" value="AMP-binding"/>
    <property type="match status" value="1"/>
</dbReference>
<dbReference type="SUPFAM" id="SSF56801">
    <property type="entry name" value="Acetyl-CoA synthetase-like"/>
    <property type="match status" value="1"/>
</dbReference>
<dbReference type="PROSITE" id="PS00455">
    <property type="entry name" value="AMP_BINDING"/>
    <property type="match status" value="1"/>
</dbReference>
<name>LACS3_ARATH</name>
<accession>Q9C7W4</accession>
<proteinExistence type="evidence at transcript level"/>
<sequence length="665" mass="74751">MATGRYIVEVEKGKQGVDGGSPSVGPVYRSIYAKDGFPEPPDDLVSAWDIFRLSVEKSPNNPMLGRREIVDGKAGKYVWQTYKEVHNVVIKLGNSIRTIGVGKGDKCGIYGANSPEWIISMEACNAHGLYCVPLYDTLGAGAIEFIICHAEVSLAFAEENKISELLKTAPKSTKYLKYIVSFGEVTNNQRVEAERHRLTIYSWDQFLKLGEGKHYELPEKRRSDVCTIMYTSGTTGDPKGVLLTNESIIHLLEGVKKLLKTIDEELTSKDVYLSYLPLAHIFDRVIEELCIYEAASIGFWRGDVKILIEDIAALKPTVFCAVPRVLERIYTGLQQKLSDGGFVKKKLFNFAFKYKHKNMEKGQPHEQASPIADKIVFKKVKEGLGGNVRLILSGAAPLAAHIESFLRVVACAHVLQGYGLTESCGGTFVSIPNELSMLGTVGPPVPNVDIRLESVPEMGYDALASNPRGEICIRGKTLFSGYYKREDLTQEVFIDGWLHTGDVGEWQPDGAMKIIDRKKNIFKLSQGEYVAVENLENIYSHVAAIESIWVYGNSYESYLVAVVCPSKIQIEHWAKEHKVSGDFESICRNQKTKEFVLGEFNRVAKDKKLKGFELIKGVHLDTVPFDMERDLITPSYKMKRPQLLKYYQKEIDEMYKKNREVQLRV</sequence>
<reference key="1">
    <citation type="journal article" date="2002" name="Plant Physiol.">
        <title>Arabidopsis contains nine long-chain acyl-coenzyme A synthetase genes that participate in fatty acid and glycerolipid metabolism.</title>
        <authorList>
            <person name="Shockey J.M."/>
            <person name="Fulda M.S."/>
            <person name="Browse J.A."/>
        </authorList>
    </citation>
    <scope>NUCLEOTIDE SEQUENCE [MRNA]</scope>
    <scope>GENE FAMILY</scope>
    <scope>ENZYME ACTIVITY</scope>
</reference>
<reference key="2">
    <citation type="journal article" date="2000" name="Nature">
        <title>Sequence and analysis of chromosome 1 of the plant Arabidopsis thaliana.</title>
        <authorList>
            <person name="Theologis A."/>
            <person name="Ecker J.R."/>
            <person name="Palm C.J."/>
            <person name="Federspiel N.A."/>
            <person name="Kaul S."/>
            <person name="White O."/>
            <person name="Alonso J."/>
            <person name="Altafi H."/>
            <person name="Araujo R."/>
            <person name="Bowman C.L."/>
            <person name="Brooks S.Y."/>
            <person name="Buehler E."/>
            <person name="Chan A."/>
            <person name="Chao Q."/>
            <person name="Chen H."/>
            <person name="Cheuk R.F."/>
            <person name="Chin C.W."/>
            <person name="Chung M.K."/>
            <person name="Conn L."/>
            <person name="Conway A.B."/>
            <person name="Conway A.R."/>
            <person name="Creasy T.H."/>
            <person name="Dewar K."/>
            <person name="Dunn P."/>
            <person name="Etgu P."/>
            <person name="Feldblyum T.V."/>
            <person name="Feng J.-D."/>
            <person name="Fong B."/>
            <person name="Fujii C.Y."/>
            <person name="Gill J.E."/>
            <person name="Goldsmith A.D."/>
            <person name="Haas B."/>
            <person name="Hansen N.F."/>
            <person name="Hughes B."/>
            <person name="Huizar L."/>
            <person name="Hunter J.L."/>
            <person name="Jenkins J."/>
            <person name="Johnson-Hopson C."/>
            <person name="Khan S."/>
            <person name="Khaykin E."/>
            <person name="Kim C.J."/>
            <person name="Koo H.L."/>
            <person name="Kremenetskaia I."/>
            <person name="Kurtz D.B."/>
            <person name="Kwan A."/>
            <person name="Lam B."/>
            <person name="Langin-Hooper S."/>
            <person name="Lee A."/>
            <person name="Lee J.M."/>
            <person name="Lenz C.A."/>
            <person name="Li J.H."/>
            <person name="Li Y.-P."/>
            <person name="Lin X."/>
            <person name="Liu S.X."/>
            <person name="Liu Z.A."/>
            <person name="Luros J.S."/>
            <person name="Maiti R."/>
            <person name="Marziali A."/>
            <person name="Militscher J."/>
            <person name="Miranda M."/>
            <person name="Nguyen M."/>
            <person name="Nierman W.C."/>
            <person name="Osborne B.I."/>
            <person name="Pai G."/>
            <person name="Peterson J."/>
            <person name="Pham P.K."/>
            <person name="Rizzo M."/>
            <person name="Rooney T."/>
            <person name="Rowley D."/>
            <person name="Sakano H."/>
            <person name="Salzberg S.L."/>
            <person name="Schwartz J.R."/>
            <person name="Shinn P."/>
            <person name="Southwick A.M."/>
            <person name="Sun H."/>
            <person name="Tallon L.J."/>
            <person name="Tambunga G."/>
            <person name="Toriumi M.J."/>
            <person name="Town C.D."/>
            <person name="Utterback T."/>
            <person name="Van Aken S."/>
            <person name="Vaysberg M."/>
            <person name="Vysotskaia V.S."/>
            <person name="Walker M."/>
            <person name="Wu D."/>
            <person name="Yu G."/>
            <person name="Fraser C.M."/>
            <person name="Venter J.C."/>
            <person name="Davis R.W."/>
        </authorList>
    </citation>
    <scope>NUCLEOTIDE SEQUENCE [LARGE SCALE GENOMIC DNA]</scope>
    <source>
        <strain>cv. Columbia</strain>
    </source>
</reference>
<reference key="3">
    <citation type="journal article" date="2017" name="Plant J.">
        <title>Araport11: a complete reannotation of the Arabidopsis thaliana reference genome.</title>
        <authorList>
            <person name="Cheng C.Y."/>
            <person name="Krishnakumar V."/>
            <person name="Chan A.P."/>
            <person name="Thibaud-Nissen F."/>
            <person name="Schobel S."/>
            <person name="Town C.D."/>
        </authorList>
    </citation>
    <scope>GENOME REANNOTATION</scope>
    <source>
        <strain>cv. Columbia</strain>
    </source>
</reference>
<reference key="4">
    <citation type="journal article" date="2003" name="Science">
        <title>Empirical analysis of transcriptional activity in the Arabidopsis genome.</title>
        <authorList>
            <person name="Yamada K."/>
            <person name="Lim J."/>
            <person name="Dale J.M."/>
            <person name="Chen H."/>
            <person name="Shinn P."/>
            <person name="Palm C.J."/>
            <person name="Southwick A.M."/>
            <person name="Wu H.C."/>
            <person name="Kim C.J."/>
            <person name="Nguyen M."/>
            <person name="Pham P.K."/>
            <person name="Cheuk R.F."/>
            <person name="Karlin-Newmann G."/>
            <person name="Liu S.X."/>
            <person name="Lam B."/>
            <person name="Sakano H."/>
            <person name="Wu T."/>
            <person name="Yu G."/>
            <person name="Miranda M."/>
            <person name="Quach H.L."/>
            <person name="Tripp M."/>
            <person name="Chang C.H."/>
            <person name="Lee J.M."/>
            <person name="Toriumi M.J."/>
            <person name="Chan M.M."/>
            <person name="Tang C.C."/>
            <person name="Onodera C.S."/>
            <person name="Deng J.M."/>
            <person name="Akiyama K."/>
            <person name="Ansari Y."/>
            <person name="Arakawa T."/>
            <person name="Banh J."/>
            <person name="Banno F."/>
            <person name="Bowser L."/>
            <person name="Brooks S.Y."/>
            <person name="Carninci P."/>
            <person name="Chao Q."/>
            <person name="Choy N."/>
            <person name="Enju A."/>
            <person name="Goldsmith A.D."/>
            <person name="Gurjal M."/>
            <person name="Hansen N.F."/>
            <person name="Hayashizaki Y."/>
            <person name="Johnson-Hopson C."/>
            <person name="Hsuan V.W."/>
            <person name="Iida K."/>
            <person name="Karnes M."/>
            <person name="Khan S."/>
            <person name="Koesema E."/>
            <person name="Ishida J."/>
            <person name="Jiang P.X."/>
            <person name="Jones T."/>
            <person name="Kawai J."/>
            <person name="Kamiya A."/>
            <person name="Meyers C."/>
            <person name="Nakajima M."/>
            <person name="Narusaka M."/>
            <person name="Seki M."/>
            <person name="Sakurai T."/>
            <person name="Satou M."/>
            <person name="Tamse R."/>
            <person name="Vaysberg M."/>
            <person name="Wallender E.K."/>
            <person name="Wong C."/>
            <person name="Yamamura Y."/>
            <person name="Yuan S."/>
            <person name="Shinozaki K."/>
            <person name="Davis R.W."/>
            <person name="Theologis A."/>
            <person name="Ecker J.R."/>
        </authorList>
    </citation>
    <scope>NUCLEOTIDE SEQUENCE [LARGE SCALE MRNA]</scope>
    <source>
        <strain>cv. Columbia</strain>
    </source>
</reference>
<reference key="5">
    <citation type="journal article" date="2003" name="Plant Physiol.">
        <title>Arabidopsis contains a large superfamily of acyl-activating enzymes. Phylogenetic and biochemical analysis reveals a new class of acyl-coenzyme a synthetases.</title>
        <authorList>
            <person name="Shockey J.M."/>
            <person name="Fulda M.S."/>
            <person name="Browse J."/>
        </authorList>
    </citation>
    <scope>GENE FAMILY ORGANIZATION</scope>
</reference>
<protein>
    <recommendedName>
        <fullName>Long chain acyl-CoA synthetase 3</fullName>
        <ecNumber>6.2.1.3</ecNumber>
    </recommendedName>
</protein>
<keyword id="KW-0067">ATP-binding</keyword>
<keyword id="KW-0276">Fatty acid metabolism</keyword>
<keyword id="KW-0436">Ligase</keyword>
<keyword id="KW-0443">Lipid metabolism</keyword>
<keyword id="KW-0460">Magnesium</keyword>
<keyword id="KW-0547">Nucleotide-binding</keyword>
<keyword id="KW-1185">Reference proteome</keyword>
<gene>
    <name type="primary">LACS3</name>
    <name type="ordered locus">At1g64400</name>
    <name type="ORF">F15H21.7</name>
</gene>
<comment type="function">
    <text>Activation of long-chain fatty acids for both synthesis of cellular lipids, and degradation via beta-oxidation. Preferentially uses palmitate, palmitoleate, oleate and linoleate.</text>
</comment>
<comment type="catalytic activity">
    <reaction evidence="3">
        <text>a long-chain fatty acid + ATP + CoA = a long-chain fatty acyl-CoA + AMP + diphosphate</text>
        <dbReference type="Rhea" id="RHEA:15421"/>
        <dbReference type="ChEBI" id="CHEBI:30616"/>
        <dbReference type="ChEBI" id="CHEBI:33019"/>
        <dbReference type="ChEBI" id="CHEBI:57287"/>
        <dbReference type="ChEBI" id="CHEBI:57560"/>
        <dbReference type="ChEBI" id="CHEBI:83139"/>
        <dbReference type="ChEBI" id="CHEBI:456215"/>
        <dbReference type="EC" id="6.2.1.3"/>
    </reaction>
</comment>
<comment type="cofactor">
    <cofactor evidence="1">
        <name>Mg(2+)</name>
        <dbReference type="ChEBI" id="CHEBI:18420"/>
    </cofactor>
</comment>
<comment type="pathway">
    <text>Lipid metabolism; fatty acid metabolism.</text>
</comment>
<comment type="similarity">
    <text evidence="4">Belongs to the ATP-dependent AMP-binding enzyme family.</text>
</comment>